<proteinExistence type="evidence at protein level"/>
<dbReference type="EC" id="2.4.2.47"/>
<dbReference type="EMBL" id="AL123456">
    <property type="protein sequence ID" value="CCP42964.1"/>
    <property type="molecule type" value="Genomic_DNA"/>
</dbReference>
<dbReference type="PIR" id="B70963">
    <property type="entry name" value="B70963"/>
</dbReference>
<dbReference type="RefSeq" id="NP_214750.1">
    <property type="nucleotide sequence ID" value="NC_000962.3"/>
</dbReference>
<dbReference type="SMR" id="P96419"/>
<dbReference type="FunCoup" id="P96419">
    <property type="interactions" value="23"/>
</dbReference>
<dbReference type="STRING" id="83332.Rv0236c"/>
<dbReference type="PaxDb" id="83332-Rv0236c"/>
<dbReference type="GeneID" id="886707"/>
<dbReference type="KEGG" id="mtu:Rv0236c"/>
<dbReference type="KEGG" id="mtv:RVBD_0236c"/>
<dbReference type="PATRIC" id="fig|83332.111.peg.268"/>
<dbReference type="TubercuList" id="Rv0236c"/>
<dbReference type="eggNOG" id="COG4981">
    <property type="taxonomic scope" value="Bacteria"/>
</dbReference>
<dbReference type="InParanoid" id="P96419"/>
<dbReference type="OrthoDB" id="5242711at2"/>
<dbReference type="PhylomeDB" id="P96419"/>
<dbReference type="UniPathway" id="UPA00963"/>
<dbReference type="Proteomes" id="UP000001584">
    <property type="component" value="Chromosome"/>
</dbReference>
<dbReference type="GO" id="GO:0005886">
    <property type="term" value="C:plasma membrane"/>
    <property type="evidence" value="ECO:0007005"/>
    <property type="project" value="MTBBASE"/>
</dbReference>
<dbReference type="GO" id="GO:0016740">
    <property type="term" value="F:transferase activity"/>
    <property type="evidence" value="ECO:0007669"/>
    <property type="project" value="UniProtKB-KW"/>
</dbReference>
<dbReference type="GO" id="GO:0045227">
    <property type="term" value="P:capsule polysaccharide biosynthetic process"/>
    <property type="evidence" value="ECO:0007669"/>
    <property type="project" value="UniProtKB-UniPathway"/>
</dbReference>
<dbReference type="FunFam" id="2.60.120.260:FF:000113">
    <property type="entry name" value="Conserved transmembrane protein"/>
    <property type="match status" value="1"/>
</dbReference>
<dbReference type="Gene3D" id="2.60.120.260">
    <property type="entry name" value="Galactose-binding domain-like"/>
    <property type="match status" value="1"/>
</dbReference>
<dbReference type="InterPro" id="IPR021798">
    <property type="entry name" value="AftD_N"/>
</dbReference>
<dbReference type="InterPro" id="IPR056997">
    <property type="entry name" value="CBM_AftD"/>
</dbReference>
<dbReference type="InterPro" id="IPR000421">
    <property type="entry name" value="FA58C"/>
</dbReference>
<dbReference type="InterPro" id="IPR008979">
    <property type="entry name" value="Galactose-bd-like_sf"/>
</dbReference>
<dbReference type="Pfam" id="PF24607">
    <property type="entry name" value="CBM_AftD"/>
    <property type="match status" value="1"/>
</dbReference>
<dbReference type="Pfam" id="PF11847">
    <property type="entry name" value="GT-C_AftD"/>
    <property type="match status" value="1"/>
</dbReference>
<dbReference type="SUPFAM" id="SSF49785">
    <property type="entry name" value="Galactose-binding domain-like"/>
    <property type="match status" value="2"/>
</dbReference>
<dbReference type="PROSITE" id="PS50022">
    <property type="entry name" value="FA58C_3"/>
    <property type="match status" value="1"/>
</dbReference>
<organism>
    <name type="scientific">Mycobacterium tuberculosis (strain ATCC 25618 / H37Rv)</name>
    <dbReference type="NCBI Taxonomy" id="83332"/>
    <lineage>
        <taxon>Bacteria</taxon>
        <taxon>Bacillati</taxon>
        <taxon>Actinomycetota</taxon>
        <taxon>Actinomycetes</taxon>
        <taxon>Mycobacteriales</taxon>
        <taxon>Mycobacteriaceae</taxon>
        <taxon>Mycobacterium</taxon>
        <taxon>Mycobacterium tuberculosis complex</taxon>
    </lineage>
</organism>
<comment type="function">
    <text evidence="1">Involved in the biosynthesis of the arabinogalactan (AG) region of the mycolylarabinogalactan-peptidoglycan (mAGP) complex, an essential component of the mycobacterial cell wall. Catalyzes the addition of an arabinofuranosyl (Araf) residue from the sugar donor decaprenyl-phospho-arabinose (DPA) on the C-3 of an alpha-(1-&gt;5)-linked Araf from the arabinan backbone of AG.</text>
</comment>
<comment type="catalytic activity">
    <reaction>
        <text>Adds an alpha-D-arabinofuranosyl group from trans,octacis-decaprenylphospho-beta-D-arabinofuranose at the 3-O-position of an alpha-(1-&gt;5)-arabinofuranan chain attached to a beta-(1-&gt;5)-galactofuranan chain.</text>
        <dbReference type="EC" id="2.4.2.47"/>
    </reaction>
</comment>
<comment type="pathway">
    <text>Cell wall biogenesis; cell wall polysaccharide biosynthesis.</text>
</comment>
<comment type="subcellular location">
    <subcellularLocation>
        <location evidence="4">Membrane</location>
        <topology evidence="4">Multi-pass membrane protein</topology>
    </subcellularLocation>
</comment>
<protein>
    <recommendedName>
        <fullName>Alpha-(1-&gt;3)-arabinofuranosyltransferase</fullName>
        <ecNumber>2.4.2.47</ecNumber>
    </recommendedName>
    <alternativeName>
        <fullName>Arabinofuranan 3-O-arabinosyltransferase</fullName>
    </alternativeName>
</protein>
<accession>P96419</accession>
<accession>L0T2X2</accession>
<name>AFTD_MYCTU</name>
<gene>
    <name type="primary">aftD</name>
    <name type="ordered locus">Rv0236c</name>
</gene>
<feature type="signal peptide" evidence="2">
    <location>
        <begin position="1"/>
        <end position="30"/>
    </location>
</feature>
<feature type="chain" id="PRO_0000420582" description="Alpha-(1-&gt;3)-arabinofuranosyltransferase">
    <location>
        <begin position="31"/>
        <end position="1400"/>
    </location>
</feature>
<feature type="transmembrane region" description="Helical" evidence="2">
    <location>
        <begin position="67"/>
        <end position="87"/>
    </location>
</feature>
<feature type="transmembrane region" description="Helical" evidence="2">
    <location>
        <begin position="91"/>
        <end position="111"/>
    </location>
</feature>
<feature type="transmembrane region" description="Helical" evidence="2">
    <location>
        <begin position="139"/>
        <end position="159"/>
    </location>
</feature>
<feature type="transmembrane region" description="Helical" evidence="2">
    <location>
        <begin position="179"/>
        <end position="199"/>
    </location>
</feature>
<feature type="transmembrane region" description="Helical" evidence="2">
    <location>
        <begin position="215"/>
        <end position="235"/>
    </location>
</feature>
<feature type="transmembrane region" description="Helical" evidence="2">
    <location>
        <begin position="282"/>
        <end position="302"/>
    </location>
</feature>
<feature type="transmembrane region" description="Helical" evidence="2">
    <location>
        <begin position="314"/>
        <end position="334"/>
    </location>
</feature>
<feature type="transmembrane region" description="Helical" evidence="2">
    <location>
        <begin position="401"/>
        <end position="421"/>
    </location>
</feature>
<feature type="transmembrane region" description="Helical" evidence="2">
    <location>
        <begin position="1256"/>
        <end position="1276"/>
    </location>
</feature>
<feature type="transmembrane region" description="Helical" evidence="2">
    <location>
        <begin position="1297"/>
        <end position="1317"/>
    </location>
</feature>
<feature type="transmembrane region" description="Helical" evidence="2">
    <location>
        <begin position="1338"/>
        <end position="1358"/>
    </location>
</feature>
<feature type="transmembrane region" description="Helical" evidence="2">
    <location>
        <begin position="1369"/>
        <end position="1389"/>
    </location>
</feature>
<feature type="domain" description="F5/8 type C" evidence="3">
    <location>
        <begin position="700"/>
        <end position="883"/>
    </location>
</feature>
<keyword id="KW-0472">Membrane</keyword>
<keyword id="KW-1185">Reference proteome</keyword>
<keyword id="KW-0732">Signal</keyword>
<keyword id="KW-0808">Transferase</keyword>
<keyword id="KW-0812">Transmembrane</keyword>
<keyword id="KW-1133">Transmembrane helix</keyword>
<reference key="1">
    <citation type="journal article" date="1998" name="Nature">
        <title>Deciphering the biology of Mycobacterium tuberculosis from the complete genome sequence.</title>
        <authorList>
            <person name="Cole S.T."/>
            <person name="Brosch R."/>
            <person name="Parkhill J."/>
            <person name="Garnier T."/>
            <person name="Churcher C.M."/>
            <person name="Harris D.E."/>
            <person name="Gordon S.V."/>
            <person name="Eiglmeier K."/>
            <person name="Gas S."/>
            <person name="Barry C.E. III"/>
            <person name="Tekaia F."/>
            <person name="Badcock K."/>
            <person name="Basham D."/>
            <person name="Brown D."/>
            <person name="Chillingworth T."/>
            <person name="Connor R."/>
            <person name="Davies R.M."/>
            <person name="Devlin K."/>
            <person name="Feltwell T."/>
            <person name="Gentles S."/>
            <person name="Hamlin N."/>
            <person name="Holroyd S."/>
            <person name="Hornsby T."/>
            <person name="Jagels K."/>
            <person name="Krogh A."/>
            <person name="McLean J."/>
            <person name="Moule S."/>
            <person name="Murphy L.D."/>
            <person name="Oliver S."/>
            <person name="Osborne J."/>
            <person name="Quail M.A."/>
            <person name="Rajandream M.A."/>
            <person name="Rogers J."/>
            <person name="Rutter S."/>
            <person name="Seeger K."/>
            <person name="Skelton S."/>
            <person name="Squares S."/>
            <person name="Squares R."/>
            <person name="Sulston J.E."/>
            <person name="Taylor K."/>
            <person name="Whitehead S."/>
            <person name="Barrell B.G."/>
        </authorList>
    </citation>
    <scope>NUCLEOTIDE SEQUENCE [LARGE SCALE GENOMIC DNA]</scope>
    <source>
        <strain>ATCC 25618 / H37Rv</strain>
    </source>
</reference>
<reference key="2">
    <citation type="journal article" date="2011" name="Mol. Cell. Proteomics">
        <title>Proteogenomic analysis of Mycobacterium tuberculosis by high resolution mass spectrometry.</title>
        <authorList>
            <person name="Kelkar D.S."/>
            <person name="Kumar D."/>
            <person name="Kumar P."/>
            <person name="Balakrishnan L."/>
            <person name="Muthusamy B."/>
            <person name="Yadav A.K."/>
            <person name="Shrivastava P."/>
            <person name="Marimuthu A."/>
            <person name="Anand S."/>
            <person name="Sundaram H."/>
            <person name="Kingsbury R."/>
            <person name="Harsha H.C."/>
            <person name="Nair B."/>
            <person name="Prasad T.S."/>
            <person name="Chauhan D.S."/>
            <person name="Katoch K."/>
            <person name="Katoch V.M."/>
            <person name="Kumar P."/>
            <person name="Chaerkady R."/>
            <person name="Ramachandran S."/>
            <person name="Dash D."/>
            <person name="Pandey A."/>
        </authorList>
    </citation>
    <scope>IDENTIFICATION BY MASS SPECTROMETRY [LARGE SCALE ANALYSIS]</scope>
    <source>
        <strain>ATCC 25618 / H37Rv</strain>
    </source>
</reference>
<sequence>MAPLSRKWLPVVGAVALALTFAQSPGQVSPDTKLDLTANPLRFLARATNLWNSDLPFGQAQNQAYGYLFPHGTFFVIGHLLGVPGWVTQRLWWAVLLTVGFWGLLRVAEALGVGGPSSRVVGAVAFALSPRVLTTLGSISSETLPMMLAPWVLLPTILALRGTSGRSVRALAAQAGLAVALMGAVNAIATLAGCLPAVIWWACHRPNRLWWRYTAWWLLAMALATLWWVMALTQLHGVSPPFLDFIESSGVTTQWSSLVEVLRGTDSWTPFVAPNATAGAPLVTGSAAILGTCLVAAAGLAGLTSPAMPARGRLVTMLLVGVVLLAVGHRGGLASPVAHPVQAFLDAAGTPLRNVHKVGPVIRLPLVLGLAQLLSRVPLPGSAPRPAWLRAFAHPERDKRVAVAVVALTALMVSTSLAWTGRVAPPGTFGALPQYWQEAADWLRTHHAATPTPGRVLVVPGAPFATQVWGTSHDEPLQVLGDGPWGVRDSIPLTPPQTIRALDSVQRLFAAGRPSAGLADTLARQGISYVLVRNDLDPETSRSARPILLHRSIAGSPGLAKLAEFGAPVGPDPLAGFVNDSGLRPRYPAIEIYRVSAPANPGAPYFAATDQLARVDGGPEVLLRLDERRRLQGQPPLGPVLMTADARAAGLPVPQVAVTDTPVARETDYGRVDHHSSAIRAPGDARHTYNRVPDYPVPGAEPVVGGWTGGRITVSSSSADATAMPDVAPASAPAAAVDGDPATAWVSNALQAAVGQWLQVDFDRPVTNAVVTLTPSATAVGAQVRRILIETVNGSTTLRFDEAGKPLTAALPYGETPWVRFTAAATDDGSAGVQFGITDLAITQYDASGFAHPVQLRHTVLVPGPPPGSAIAGWDLGSELLGRPGCAPGPDGVRCAASMALAPEEPANLSRTLTVPRPVSVTPMVWVRPRQGPKLADLIAAPSTTRASGDSDLVDILGSAYAAADGDPATAWTAPQRVVQHKTPPTLTLTLPRPTVVTGLRLAASRSMLPAHPTVVAINLGDGPQVRQLQVGELTTLWLHPRVTDTVSVSLLDWDDVIDRNALGFDQLKPPGLAEVVVLSAGGAPIAPADAARNRARALTVDCDHGPVVAVAGRFVHTSIRTTVGALLDGEPVAALPCEREPIALPAGQQELLISPGAAFVVDGAQLSTPGAGLSSATVTSAETGAWGPTHREVRVPESATSRVLVVPESINSGWVARTSTGARLTPIAVNGWQQAWVVPAGNPGTITLTFAPNSLYRASLAIGLALLPLLALLAFWRTGRRQLADRPTPPWRPGAWAAAGVLAAGAVIASIAGVMVMGTALGVRYALRRRERLRDRVTVGLAAGGLILAGAALSRHPWRSVDGYAGNWASVQLLALISVSVVAASVVATSESRGQDRMQ</sequence>
<evidence type="ECO:0000250" key="1"/>
<evidence type="ECO:0000255" key="2"/>
<evidence type="ECO:0000255" key="3">
    <source>
        <dbReference type="PROSITE-ProRule" id="PRU00081"/>
    </source>
</evidence>
<evidence type="ECO:0000305" key="4"/>